<comment type="function">
    <text evidence="10 12 19 24 25 29">Membrane-bound serine protease (PubMed:18976966, PubMed:20518742, PubMed:25156943, PubMed:25588876). Through the cleavage of cell surface hemojuvelin (HJV), a regulator of the expression of the iron absorption-regulating hormone hepicidin/HAMP, plays a role in iron homeostasis (PubMed:18408718, PubMed:18976966, PubMed:25156943).</text>
</comment>
<comment type="subunit">
    <text evidence="12 13 20">Interacts with HJV.</text>
</comment>
<comment type="interaction">
    <interactant intactId="EBI-25839648">
        <id>Q8IU80-2</id>
    </interactant>
    <interactant intactId="EBI-11954292">
        <id>Q86V38</id>
        <label>ATN1</label>
    </interactant>
    <organismsDiffer>false</organismsDiffer>
    <experiments>3</experiments>
</comment>
<comment type="interaction">
    <interactant intactId="EBI-25839648">
        <id>Q8IU80-2</id>
    </interactant>
    <interactant intactId="EBI-6875961">
        <id>P02489</id>
        <label>CRYAA</label>
    </interactant>
    <organismsDiffer>false</organismsDiffer>
    <experiments>3</experiments>
</comment>
<comment type="interaction">
    <interactant intactId="EBI-25839648">
        <id>Q8IU80-2</id>
    </interactant>
    <interactant intactId="EBI-356015">
        <id>Q14204</id>
        <label>DYNC1H1</label>
    </interactant>
    <organismsDiffer>false</organismsDiffer>
    <experiments>3</experiments>
</comment>
<comment type="interaction">
    <interactant intactId="EBI-25839648">
        <id>Q8IU80-2</id>
    </interactant>
    <interactant intactId="EBI-2432309">
        <id>Q92876</id>
        <label>KLK6</label>
    </interactant>
    <organismsDiffer>false</organismsDiffer>
    <experiments>3</experiments>
</comment>
<comment type="interaction">
    <interactant intactId="EBI-11686560">
        <id>Q8IU80-4</id>
    </interactant>
    <interactant intactId="EBI-10900704">
        <id>Q6ZVN8</id>
        <label>HJV</label>
    </interactant>
    <organismsDiffer>false</organismsDiffer>
    <experiments>3</experiments>
</comment>
<comment type="subcellular location">
    <subcellularLocation>
        <location evidence="12 19 25">Cell membrane</location>
        <topology evidence="19">Single-pass type II membrane protein</topology>
    </subcellularLocation>
    <text evidence="24">The processed, activated two-chains form is released in the extracellular space.</text>
</comment>
<comment type="alternative products">
    <event type="alternative splicing"/>
    <isoform>
        <id>Q8IU80-4</id>
        <name>1</name>
        <sequence type="displayed"/>
    </isoform>
    <isoform>
        <id>Q8IU80-1</id>
        <name>2</name>
        <sequence type="described" ref="VSP_035562"/>
    </isoform>
    <isoform>
        <id>Q8IU80-2</id>
        <name>3</name>
        <sequence type="described" ref="VSP_008379 VSP_008380"/>
    </isoform>
    <isoform>
        <id>Q8IU80-5</id>
        <name>4</name>
        <sequence type="described" ref="VSP_035562 VSP_035563"/>
    </isoform>
</comment>
<comment type="domain">
    <text evidence="1">Cytoplasmic domain mediates HAMP suppression via proximal promoter element(s).</text>
</comment>
<comment type="PTM">
    <text evidence="12 19 24">The single-chain zymogen undergoes autoproteolytic processing (PubMed:18976966, PubMed:20518742, PubMed:25156943). This results in TMPRSS6 shedding from the cell surface and conversion into an activated two-chains form which is released extracellularly (PubMed:18976966, PubMed:20518742, PubMed:25156943). The process involves a trans-activation mechanism that requires TMPRSS6 oligomerization (PubMed:20518742, PubMed:25156943).</text>
</comment>
<comment type="disease" evidence="10 11 12 13 14 15 16 18 20 21 23 24 25">
    <disease id="DI-01834">
        <name>Iron-refractory iron deficiency anemia</name>
        <acronym>IRIDA</acronym>
        <description>Key features include congenital hypochromic microcytic anemia, very low mean corpuscular erythrocyte volume, low transferrin saturation, abnormal iron absorption characterized by no hematologic improvement following treatment with oral iron, and abnormal iron utilization characterized by a sluggish, incomplete response to parenteral iron.</description>
        <dbReference type="MIM" id="206200"/>
    </disease>
    <text evidence="18">The disease is caused by variants affecting the gene represented in this entry. Mutations leading to abrogation of TMPRSS6 activity are associated with IRIDA due to elevated levels of hepcidin, a negative regulator of plasma iron pool (PubMed:20232450).</text>
</comment>
<comment type="similarity">
    <text evidence="6">Belongs to the peptidase S1 family.</text>
</comment>
<comment type="caution">
    <text evidence="7 31">A study described a function as serine protease towards extracellular matrix proteins in the liver; however, this article was later retracted.</text>
</comment>
<proteinExistence type="evidence at protein level"/>
<sequence>MLLLFHSKRMPVAEAPQVAGGQGDGGDGEEAEPEGMFKACEDSKRKARGYLRLVPLFVLLALLVLASAGVLLWYFLGYKAEVMVSQVYSGSLRVLNRHFSQDLTRRESSAFRSETAKAQKMLKELITSTRLGTYYNSSSVYSFGEGPLTCFFWFILQIPEHRRLMLSPEVVQALLVEELLSTVNSSAAVPYRAEYEVDPEGLVILEASVKDIAALNSTLGCYRYSYVGQGQVLRLKGPDHLASSCLWHLQGPKDLMLKLRLEWTLAECRDRLAMYDVAGPLEKRLITSVYGCSRQEPVVEVLASGAIMAVVWKKGLHSYYDPFVLSVQPVVFQACEVNLTLDNRLDSQGVLSTPYFPSYYSPQTHCSWHLTVPSLDYGLALWFDAYALRRQKYDLPCTQGQWTIQNRRLCGLRILQPYAERIPVVATAGITINFTSQISLTGPGVRVHYGLYNQSDPCPGEFLCSVNGLCVPACDGVKDCPNGLDERNCVCRATFQCKEDSTCISLPKVCDGQPDCLNGSDEEQCQEGVPCGTFTFQCEDRSCVKKPNPQCDGRPDCRDGSDEEHCDCGLQGPSSRIVGGAVSSEGEWPWQASLQVRGRHICGGALIADRWVITAAHCFQEDSMASTVLWTVFLGKVWQNSRWPGEVSFKVSRLLLHPYHEEDSHDYDVALLQLDHPVVRSAAVRPVCLPARSHFFEPGLHCWITGWGALREGGPISNALQKVDVQLIPQDLCSEVYRYQVTPRMLCAGYRKGKKDACQGDSGGPLVCKALSGRWFLAGLVSWGLGCGRPNYFGVYTRITGVISWIQQVVT</sequence>
<evidence type="ECO:0000250" key="1"/>
<evidence type="ECO:0000255" key="2"/>
<evidence type="ECO:0000255" key="3">
    <source>
        <dbReference type="PROSITE-ProRule" id="PRU00059"/>
    </source>
</evidence>
<evidence type="ECO:0000255" key="4">
    <source>
        <dbReference type="PROSITE-ProRule" id="PRU00124"/>
    </source>
</evidence>
<evidence type="ECO:0000255" key="5">
    <source>
        <dbReference type="PROSITE-ProRule" id="PRU00188"/>
    </source>
</evidence>
<evidence type="ECO:0000255" key="6">
    <source>
        <dbReference type="PROSITE-ProRule" id="PRU00274"/>
    </source>
</evidence>
<evidence type="ECO:0000269" key="7">
    <source>
    </source>
</evidence>
<evidence type="ECO:0000269" key="8">
    <source>
    </source>
</evidence>
<evidence type="ECO:0000269" key="9">
    <source>
    </source>
</evidence>
<evidence type="ECO:0000269" key="10">
    <source>
    </source>
</evidence>
<evidence type="ECO:0000269" key="11">
    <source>
    </source>
</evidence>
<evidence type="ECO:0000269" key="12">
    <source>
    </source>
</evidence>
<evidence type="ECO:0000269" key="13">
    <source>
    </source>
</evidence>
<evidence type="ECO:0000269" key="14">
    <source>
    </source>
</evidence>
<evidence type="ECO:0000269" key="15">
    <source>
    </source>
</evidence>
<evidence type="ECO:0000269" key="16">
    <source>
    </source>
</evidence>
<evidence type="ECO:0000269" key="17">
    <source>
    </source>
</evidence>
<evidence type="ECO:0000269" key="18">
    <source>
    </source>
</evidence>
<evidence type="ECO:0000269" key="19">
    <source>
    </source>
</evidence>
<evidence type="ECO:0000269" key="20">
    <source>
    </source>
</evidence>
<evidence type="ECO:0000269" key="21">
    <source>
    </source>
</evidence>
<evidence type="ECO:0000269" key="22">
    <source>
    </source>
</evidence>
<evidence type="ECO:0000269" key="23">
    <source>
    </source>
</evidence>
<evidence type="ECO:0000269" key="24">
    <source>
    </source>
</evidence>
<evidence type="ECO:0000269" key="25">
    <source>
    </source>
</evidence>
<evidence type="ECO:0000303" key="26">
    <source>
    </source>
</evidence>
<evidence type="ECO:0000303" key="27">
    <source>
    </source>
</evidence>
<evidence type="ECO:0000303" key="28">
    <source>
    </source>
</evidence>
<evidence type="ECO:0000303" key="29">
    <source>
    </source>
</evidence>
<evidence type="ECO:0000305" key="30"/>
<evidence type="ECO:0000305" key="31">
    <source>
    </source>
</evidence>
<gene>
    <name type="primary">TMPRSS6</name>
    <name type="ORF">UNQ354/PRO618</name>
</gene>
<reference key="1">
    <citation type="submission" date="2001-09" db="EMBL/GenBank/DDBJ databases">
        <title>TMPRSS6, a new type II transmembrane serine protease.</title>
        <authorList>
            <person name="Hooper J.D."/>
            <person name="Quigley J.P."/>
        </authorList>
    </citation>
    <scope>NUCLEOTIDE SEQUENCE [GENOMIC DNA / MRNA] (ISOFORM 1)</scope>
</reference>
<reference key="2">
    <citation type="journal article" date="2003" name="Genome Res.">
        <title>The secreted protein discovery initiative (SPDI), a large-scale effort to identify novel human secreted and transmembrane proteins: a bioinformatics assessment.</title>
        <authorList>
            <person name="Clark H.F."/>
            <person name="Gurney A.L."/>
            <person name="Abaya E."/>
            <person name="Baker K."/>
            <person name="Baldwin D.T."/>
            <person name="Brush J."/>
            <person name="Chen J."/>
            <person name="Chow B."/>
            <person name="Chui C."/>
            <person name="Crowley C."/>
            <person name="Currell B."/>
            <person name="Deuel B."/>
            <person name="Dowd P."/>
            <person name="Eaton D."/>
            <person name="Foster J.S."/>
            <person name="Grimaldi C."/>
            <person name="Gu Q."/>
            <person name="Hass P.E."/>
            <person name="Heldens S."/>
            <person name="Huang A."/>
            <person name="Kim H.S."/>
            <person name="Klimowski L."/>
            <person name="Jin Y."/>
            <person name="Johnson S."/>
            <person name="Lee J."/>
            <person name="Lewis L."/>
            <person name="Liao D."/>
            <person name="Mark M.R."/>
            <person name="Robbie E."/>
            <person name="Sanchez C."/>
            <person name="Schoenfeld J."/>
            <person name="Seshagiri S."/>
            <person name="Simmons L."/>
            <person name="Singh J."/>
            <person name="Smith V."/>
            <person name="Stinson J."/>
            <person name="Vagts A."/>
            <person name="Vandlen R.L."/>
            <person name="Watanabe C."/>
            <person name="Wieand D."/>
            <person name="Woods K."/>
            <person name="Xie M.-H."/>
            <person name="Yansura D.G."/>
            <person name="Yi S."/>
            <person name="Yu G."/>
            <person name="Yuan J."/>
            <person name="Zhang M."/>
            <person name="Zhang Z."/>
            <person name="Goddard A.D."/>
            <person name="Wood W.I."/>
            <person name="Godowski P.J."/>
            <person name="Gray A.M."/>
        </authorList>
    </citation>
    <scope>NUCLEOTIDE SEQUENCE [LARGE SCALE MRNA] (ISOFORM 2)</scope>
    <scope>VARIANT ALA-736</scope>
</reference>
<reference key="3">
    <citation type="journal article" date="2004" name="Genome Biol.">
        <title>A genome annotation-driven approach to cloning the human ORFeome.</title>
        <authorList>
            <person name="Collins J.E."/>
            <person name="Wright C.L."/>
            <person name="Edwards C.A."/>
            <person name="Davis M.P."/>
            <person name="Grinham J.A."/>
            <person name="Cole C.G."/>
            <person name="Goward M.E."/>
            <person name="Aguado B."/>
            <person name="Mallya M."/>
            <person name="Mokrab Y."/>
            <person name="Huckle E.J."/>
            <person name="Beare D.M."/>
            <person name="Dunham I."/>
        </authorList>
    </citation>
    <scope>NUCLEOTIDE SEQUENCE [LARGE SCALE MRNA] (ISOFORM 4)</scope>
</reference>
<reference key="4">
    <citation type="journal article" date="1999" name="Nature">
        <title>The DNA sequence of human chromosome 22.</title>
        <authorList>
            <person name="Dunham I."/>
            <person name="Hunt A.R."/>
            <person name="Collins J.E."/>
            <person name="Bruskiewich R."/>
            <person name="Beare D.M."/>
            <person name="Clamp M."/>
            <person name="Smink L.J."/>
            <person name="Ainscough R."/>
            <person name="Almeida J.P."/>
            <person name="Babbage A.K."/>
            <person name="Bagguley C."/>
            <person name="Bailey J."/>
            <person name="Barlow K.F."/>
            <person name="Bates K.N."/>
            <person name="Beasley O.P."/>
            <person name="Bird C.P."/>
            <person name="Blakey S.E."/>
            <person name="Bridgeman A.M."/>
            <person name="Buck D."/>
            <person name="Burgess J."/>
            <person name="Burrill W.D."/>
            <person name="Burton J."/>
            <person name="Carder C."/>
            <person name="Carter N.P."/>
            <person name="Chen Y."/>
            <person name="Clark G."/>
            <person name="Clegg S.M."/>
            <person name="Cobley V.E."/>
            <person name="Cole C.G."/>
            <person name="Collier R.E."/>
            <person name="Connor R."/>
            <person name="Conroy D."/>
            <person name="Corby N.R."/>
            <person name="Coville G.J."/>
            <person name="Cox A.V."/>
            <person name="Davis J."/>
            <person name="Dawson E."/>
            <person name="Dhami P.D."/>
            <person name="Dockree C."/>
            <person name="Dodsworth S.J."/>
            <person name="Durbin R.M."/>
            <person name="Ellington A.G."/>
            <person name="Evans K.L."/>
            <person name="Fey J.M."/>
            <person name="Fleming K."/>
            <person name="French L."/>
            <person name="Garner A.A."/>
            <person name="Gilbert J.G.R."/>
            <person name="Goward M.E."/>
            <person name="Grafham D.V."/>
            <person name="Griffiths M.N.D."/>
            <person name="Hall C."/>
            <person name="Hall R.E."/>
            <person name="Hall-Tamlyn G."/>
            <person name="Heathcott R.W."/>
            <person name="Ho S."/>
            <person name="Holmes S."/>
            <person name="Hunt S.E."/>
            <person name="Jones M.C."/>
            <person name="Kershaw J."/>
            <person name="Kimberley A.M."/>
            <person name="King A."/>
            <person name="Laird G.K."/>
            <person name="Langford C.F."/>
            <person name="Leversha M.A."/>
            <person name="Lloyd C."/>
            <person name="Lloyd D.M."/>
            <person name="Martyn I.D."/>
            <person name="Mashreghi-Mohammadi M."/>
            <person name="Matthews L.H."/>
            <person name="Mccann O.T."/>
            <person name="Mcclay J."/>
            <person name="Mclaren S."/>
            <person name="McMurray A.A."/>
            <person name="Milne S.A."/>
            <person name="Mortimore B.J."/>
            <person name="Odell C.N."/>
            <person name="Pavitt R."/>
            <person name="Pearce A.V."/>
            <person name="Pearson D."/>
            <person name="Phillimore B.J.C.T."/>
            <person name="Phillips S.H."/>
            <person name="Plumb R.W."/>
            <person name="Ramsay H."/>
            <person name="Ramsey Y."/>
            <person name="Rogers L."/>
            <person name="Ross M.T."/>
            <person name="Scott C.E."/>
            <person name="Sehra H.K."/>
            <person name="Skuce C.D."/>
            <person name="Smalley S."/>
            <person name="Smith M.L."/>
            <person name="Soderlund C."/>
            <person name="Spragon L."/>
            <person name="Steward C.A."/>
            <person name="Sulston J.E."/>
            <person name="Swann R.M."/>
            <person name="Vaudin M."/>
            <person name="Wall M."/>
            <person name="Wallis J.M."/>
            <person name="Whiteley M.N."/>
            <person name="Willey D.L."/>
            <person name="Williams L."/>
            <person name="Williams S.A."/>
            <person name="Williamson H."/>
            <person name="Wilmer T.E."/>
            <person name="Wilming L."/>
            <person name="Wright C.L."/>
            <person name="Hubbard T."/>
            <person name="Bentley D.R."/>
            <person name="Beck S."/>
            <person name="Rogers J."/>
            <person name="Shimizu N."/>
            <person name="Minoshima S."/>
            <person name="Kawasaki K."/>
            <person name="Sasaki T."/>
            <person name="Asakawa S."/>
            <person name="Kudoh J."/>
            <person name="Shintani A."/>
            <person name="Shibuya K."/>
            <person name="Yoshizaki Y."/>
            <person name="Aoki N."/>
            <person name="Mitsuyama S."/>
            <person name="Roe B.A."/>
            <person name="Chen F."/>
            <person name="Chu L."/>
            <person name="Crabtree J."/>
            <person name="Deschamps S."/>
            <person name="Do A."/>
            <person name="Do T."/>
            <person name="Dorman A."/>
            <person name="Fang F."/>
            <person name="Fu Y."/>
            <person name="Hu P."/>
            <person name="Hua A."/>
            <person name="Kenton S."/>
            <person name="Lai H."/>
            <person name="Lao H.I."/>
            <person name="Lewis J."/>
            <person name="Lewis S."/>
            <person name="Lin S.-P."/>
            <person name="Loh P."/>
            <person name="Malaj E."/>
            <person name="Nguyen T."/>
            <person name="Pan H."/>
            <person name="Phan S."/>
            <person name="Qi S."/>
            <person name="Qian Y."/>
            <person name="Ray L."/>
            <person name="Ren Q."/>
            <person name="Shaull S."/>
            <person name="Sloan D."/>
            <person name="Song L."/>
            <person name="Wang Q."/>
            <person name="Wang Y."/>
            <person name="Wang Z."/>
            <person name="White J."/>
            <person name="Willingham D."/>
            <person name="Wu H."/>
            <person name="Yao Z."/>
            <person name="Zhan M."/>
            <person name="Zhang G."/>
            <person name="Chissoe S."/>
            <person name="Murray J."/>
            <person name="Miller N."/>
            <person name="Minx P."/>
            <person name="Fulton R."/>
            <person name="Johnson D."/>
            <person name="Bemis G."/>
            <person name="Bentley D."/>
            <person name="Bradshaw H."/>
            <person name="Bourne S."/>
            <person name="Cordes M."/>
            <person name="Du Z."/>
            <person name="Fulton L."/>
            <person name="Goela D."/>
            <person name="Graves T."/>
            <person name="Hawkins J."/>
            <person name="Hinds K."/>
            <person name="Kemp K."/>
            <person name="Latreille P."/>
            <person name="Layman D."/>
            <person name="Ozersky P."/>
            <person name="Rohlfing T."/>
            <person name="Scheet P."/>
            <person name="Walker C."/>
            <person name="Wamsley A."/>
            <person name="Wohldmann P."/>
            <person name="Pepin K."/>
            <person name="Nelson J."/>
            <person name="Korf I."/>
            <person name="Bedell J.A."/>
            <person name="Hillier L.W."/>
            <person name="Mardis E."/>
            <person name="Waterston R."/>
            <person name="Wilson R."/>
            <person name="Emanuel B.S."/>
            <person name="Shaikh T."/>
            <person name="Kurahashi H."/>
            <person name="Saitta S."/>
            <person name="Budarf M.L."/>
            <person name="McDermid H.E."/>
            <person name="Johnson A."/>
            <person name="Wong A.C.C."/>
            <person name="Morrow B.E."/>
            <person name="Edelmann L."/>
            <person name="Kim U.J."/>
            <person name="Shizuya H."/>
            <person name="Simon M.I."/>
            <person name="Dumanski J.P."/>
            <person name="Peyrard M."/>
            <person name="Kedra D."/>
            <person name="Seroussi E."/>
            <person name="Fransson I."/>
            <person name="Tapia I."/>
            <person name="Bruder C.E."/>
            <person name="O'Brien K.P."/>
            <person name="Wilkinson P."/>
            <person name="Bodenteich A."/>
            <person name="Hartman K."/>
            <person name="Hu X."/>
            <person name="Khan A.S."/>
            <person name="Lane L."/>
            <person name="Tilahun Y."/>
            <person name="Wright H."/>
        </authorList>
    </citation>
    <scope>NUCLEOTIDE SEQUENCE [LARGE SCALE GENOMIC DNA]</scope>
</reference>
<reference key="5">
    <citation type="journal article" date="2004" name="Genome Res.">
        <title>The status, quality, and expansion of the NIH full-length cDNA project: the Mammalian Gene Collection (MGC).</title>
        <authorList>
            <consortium name="The MGC Project Team"/>
        </authorList>
    </citation>
    <scope>NUCLEOTIDE SEQUENCE [LARGE SCALE MRNA] (ISOFORM 3)</scope>
    <source>
        <tissue>Brain</tissue>
    </source>
</reference>
<reference key="6">
    <citation type="journal article" date="2002" name="J. Biol. Chem.">
        <title>Matriptase-2, a membrane-bound mosaic serine proteinase predominantly expressed in human liver and showing degrading activity against extracellular matrix proteins.</title>
        <authorList>
            <person name="Velasco G."/>
            <person name="Cal S."/>
            <person name="Quesada V."/>
            <person name="Sanchez L.M."/>
            <person name="Lopez-Otin C."/>
        </authorList>
    </citation>
    <scope>RETRACTED PAPER</scope>
    <source>
        <tissue>Fetal liver</tissue>
    </source>
</reference>
<reference key="7">
    <citation type="journal article" date="2019" name="J. Biol. Chem.">
        <authorList>
            <person name="Velasco G."/>
            <person name="Cal S."/>
            <person name="Quesada V."/>
            <person name="Sanchez L.M."/>
            <person name="Lopez-Otin C."/>
        </authorList>
    </citation>
    <scope>RETRACTION NOTICE OF PUBMED:12149247</scope>
</reference>
<reference key="8">
    <citation type="journal article" date="2003" name="Cancer Metastasis Rev.">
        <title>Membrane anchored serine proteases: a rapidly expanding group of cell surface proteolytic enzymes with potential roles in cancer.</title>
        <authorList>
            <person name="Netzel-Arnett S."/>
            <person name="Hooper J.D."/>
            <person name="Szabo R."/>
            <person name="Madison E.L."/>
            <person name="Quigley J.P."/>
            <person name="Bugge T.H."/>
            <person name="Antalis T.M."/>
        </authorList>
    </citation>
    <scope>REVIEW</scope>
</reference>
<reference key="9">
    <citation type="journal article" date="2008" name="Cell Metab.">
        <title>The serine protease matriptase-2 (TMPRSS6) inhibits hepcidin activation by cleaving membrane hemojuvelin.</title>
        <authorList>
            <person name="Silvestri L."/>
            <person name="Pagani A."/>
            <person name="Nai A."/>
            <person name="De Domenico I."/>
            <person name="Kaplan J."/>
            <person name="Camaschella C."/>
        </authorList>
    </citation>
    <scope>FUNCTION</scope>
    <scope>INTERACTION WITH HJV</scope>
    <scope>SUBCELLULAR LOCATION</scope>
    <scope>PROTEOLYTIC PROCESSING</scope>
    <scope>CHARACTERIZATION OF VARIANT IRIDA CYS-774</scope>
</reference>
<reference key="10">
    <citation type="journal article" date="2008" name="Front. Biosci.">
        <title>The type II transmembrane serine protease matriptase-2 -- identification, structural features, enzymology, expression pattern and potential roles.</title>
        <authorList>
            <person name="Ramsay A.J."/>
            <person name="Reid J.C."/>
            <person name="Velasco G."/>
            <person name="Quigley J.P."/>
            <person name="Hooper J.D."/>
        </authorList>
    </citation>
    <scope>REVIEW</scope>
</reference>
<reference key="11">
    <citation type="journal article" date="2008" name="Haematologica">
        <title>A mutation in the TMPRSS6 gene, encoding a transmembrane serine protease that suppresses hepcidin production, in familial iron deficiency anemia refractory to oral iron.</title>
        <authorList>
            <person name="Melis M.A."/>
            <person name="Cau M."/>
            <person name="Congiu R."/>
            <person name="Sole G."/>
            <person name="Barella S."/>
            <person name="Cao A."/>
            <person name="Westerman M."/>
            <person name="Cazzola M."/>
            <person name="Galanello R."/>
        </authorList>
    </citation>
    <scope>INVOLVEMENT IN IRIDA</scope>
</reference>
<reference key="12">
    <citation type="journal article" date="2009" name="Blood">
        <title>Molecular mechanisms of the defective hepcidin inhibition in TMPRSS6 mutations associated with iron-refractory iron deficiency anemia.</title>
        <authorList>
            <person name="Silvestri L."/>
            <person name="Guillem F."/>
            <person name="Pagani A."/>
            <person name="Nai A."/>
            <person name="Oudin C."/>
            <person name="Silva M."/>
            <person name="Toutain F."/>
            <person name="Kannengiesser C."/>
            <person name="Beaumont C."/>
            <person name="Camaschella C."/>
            <person name="Grandchamp B."/>
        </authorList>
    </citation>
    <scope>INTERACTION WITH HJV</scope>
    <scope>VARIANTS IRIDA ASN-521 AND LYS-522</scope>
    <scope>CHARACTERIZATION OF VARIANTS IRIDA ARG-442; ASN-521 AND LYS-522</scope>
</reference>
<reference key="13">
    <citation type="journal article" date="2009" name="Br. J. Haematol.">
        <title>A novel splice site mutation c.2278 (-1) G&gt;C in the TMPRSS6 gene causes deletion of the substrate binding site of the serine protease resulting in refractory iron deficiency anaemia.</title>
        <authorList>
            <person name="Edison E.S."/>
            <person name="Athiyarath R."/>
            <person name="Rajasekar T."/>
            <person name="Westerman M."/>
            <person name="Srivastava A."/>
            <person name="Chandy M."/>
        </authorList>
    </citation>
    <scope>INVOLVEMENT IN IRIDA</scope>
</reference>
<reference key="14">
    <citation type="journal article" date="2010" name="Biochem. J.">
        <title>Proteolytic processing of the serine protease matriptase-2: identification of the cleavage sites required for its autocatalytic release from the cell surface.</title>
        <authorList>
            <person name="Stirnberg M."/>
            <person name="Maurer E."/>
            <person name="Horstmeyer A."/>
            <person name="Kolp S."/>
            <person name="Frank S."/>
            <person name="Bald T."/>
            <person name="Arenz K."/>
            <person name="Janzer A."/>
            <person name="Prager K."/>
            <person name="Wunderlich P."/>
            <person name="Walter J."/>
            <person name="Gutschow M."/>
        </authorList>
    </citation>
    <scope>FUNCTION</scope>
    <scope>SUBCELLULAR LOCATION</scope>
    <scope>PROTEOLYTIC PROCESSING</scope>
    <scope>IDENTIFICATION BY MASS SPECTROMETRY</scope>
    <scope>MUTAGENESIS OF SER-762</scope>
</reference>
<reference key="15">
    <citation type="journal article" date="2010" name="Biochem. J.">
        <title>A novel TMPRSS6 mutation that prevents protease auto-activation causes IRIDA.</title>
        <authorList>
            <person name="Altamura S."/>
            <person name="D'Alessio F."/>
            <person name="Selle B."/>
            <person name="Muckenthaler M.U."/>
        </authorList>
    </citation>
    <scope>INTERACTION WITH HJV</scope>
    <scope>VARIANT IRIDA CYS-141</scope>
    <scope>CHARACTERIZATION OF VARIANT IRIDA CYS-141</scope>
</reference>
<reference key="16">
    <citation type="journal article" date="2006" name="Science">
        <title>The consensus coding sequences of human breast and colorectal cancers.</title>
        <authorList>
            <person name="Sjoeblom T."/>
            <person name="Jones S."/>
            <person name="Wood L.D."/>
            <person name="Parsons D.W."/>
            <person name="Lin J."/>
            <person name="Barber T.D."/>
            <person name="Mandelker D."/>
            <person name="Leary R.J."/>
            <person name="Ptak J."/>
            <person name="Silliman N."/>
            <person name="Szabo S."/>
            <person name="Buckhaults P."/>
            <person name="Farrell C."/>
            <person name="Meeh P."/>
            <person name="Markowitz S.D."/>
            <person name="Willis J."/>
            <person name="Dawson D."/>
            <person name="Willson J.K.V."/>
            <person name="Gazdar A.F."/>
            <person name="Hartigan J."/>
            <person name="Wu L."/>
            <person name="Liu C."/>
            <person name="Parmigiani G."/>
            <person name="Park B.H."/>
            <person name="Bachman K.E."/>
            <person name="Papadopoulos N."/>
            <person name="Vogelstein B."/>
            <person name="Kinzler K.W."/>
            <person name="Velculescu V.E."/>
        </authorList>
    </citation>
    <scope>VARIANTS [LARGE SCALE ANALYSIS] HIS-223 AND SER-234</scope>
</reference>
<reference key="17">
    <citation type="journal article" date="2008" name="Nat. Genet.">
        <title>Mutations in TMPRSS6 cause iron-refractory iron deficiency anemia (IRIDA).</title>
        <authorList>
            <person name="Finberg K.E."/>
            <person name="Heeney M.M."/>
            <person name="Campagna D.R."/>
            <person name="Aydinok Y."/>
            <person name="Pearson H.A."/>
            <person name="Hartman K.R."/>
            <person name="Mayo M.M."/>
            <person name="Samuel S.M."/>
            <person name="Strouse J.J."/>
            <person name="Markianos K."/>
            <person name="Andrews N.C."/>
            <person name="Fleming M.D."/>
        </authorList>
    </citation>
    <scope>VARIANTS IRIDA ARG-442; ASN-521 AND CYS-774</scope>
    <scope>FUNCTION IN IRON HOMEOSTASIS</scope>
</reference>
<reference key="18">
    <citation type="journal article" date="2009" name="Eur. J. Haematol.">
        <title>Haematologic data, iron parameters and molecular findings in two new cases of iron-refractory iron deficiency anaemia.</title>
        <authorList>
            <person name="Tchou I."/>
            <person name="Diepold M."/>
            <person name="Pilotto P.A."/>
            <person name="Swinkels D."/>
            <person name="Neerman-Arbez M."/>
            <person name="Beris P."/>
        </authorList>
    </citation>
    <scope>VARIANT IRIDA LEU-304</scope>
</reference>
<reference key="19">
    <citation type="journal article" date="2009" name="Hum. Mol. Genet.">
        <title>Matriptase-2 mutations in iron-refractory iron deficiency anemia patients provide new insights into protease activation mechanisms.</title>
        <authorList>
            <person name="Ramsay A.J."/>
            <person name="Quesada V."/>
            <person name="Sanchez M."/>
            <person name="Garabaya C."/>
            <person name="Sarda M.P."/>
            <person name="Baiget M."/>
            <person name="Remacha A."/>
            <person name="Velasco G."/>
            <person name="Lopez-Otin C."/>
        </authorList>
    </citation>
    <scope>VARIANT IRIDA ASP-118</scope>
    <scope>CHARACTERIZATION OF VARIANT IRIDA ASP-118</scope>
</reference>
<reference key="20">
    <citation type="journal article" date="2010" name="Blood Cells Mol. Dis.">
        <title>Polymorphisms and mutations of human TMPRSS6 in iron deficiency anemia.</title>
        <authorList>
            <person name="Beutler E."/>
            <person name="Van Geet C."/>
            <person name="te Loo D.M."/>
            <person name="Gelbart T."/>
            <person name="Crain K."/>
            <person name="Truksa J."/>
            <person name="Lee P.L."/>
        </authorList>
    </citation>
    <scope>VARIANTS ASP-228; GLU-253; TRP-446; PHE-674; ALA-736 AND ILE-795</scope>
</reference>
<reference key="21">
    <citation type="journal article" date="2010" name="Hum. Mutat.">
        <title>Novel TMPRSS6 mutations associated with iron-refractory iron deficiency anemia (IRIDA).</title>
        <authorList>
            <person name="De Falco L."/>
            <person name="Totaro F."/>
            <person name="Nai A."/>
            <person name="Pagani A."/>
            <person name="Girelli D."/>
            <person name="Silvestri L."/>
            <person name="Piscopo C."/>
            <person name="Campostrini N."/>
            <person name="Dufour C."/>
            <person name="Al Manjomi F."/>
            <person name="Minkov M."/>
            <person name="Van Vuurden D.G."/>
            <person name="Feliu A."/>
            <person name="Kattamis A."/>
            <person name="Camaschella C."/>
            <person name="Iolascon A."/>
        </authorList>
    </citation>
    <scope>VARIANTS IRIDA CYS-141; THR-212; GLN-271; LEU-304 AND SER-510</scope>
    <scope>CHARACTERIZATION OF VARIANTS IRIDA THR-212 AND GLN-271</scope>
</reference>
<reference key="22">
    <citation type="journal article" date="2011" name="Int. J. Hematol.">
        <title>Novel missense mutation in the TMPRSS6 gene in a Japanese female with iron-refractory iron deficiency anemia.</title>
        <authorList>
            <person name="Sato T."/>
            <person name="Iyama S."/>
            <person name="Murase K."/>
            <person name="Kamihara Y."/>
            <person name="Ono K."/>
            <person name="Kikuchi S."/>
            <person name="Takada K."/>
            <person name="Miyanishi K."/>
            <person name="Sato Y."/>
            <person name="Takimoto R."/>
            <person name="Kobune M."/>
            <person name="Kato J."/>
        </authorList>
    </citation>
    <scope>VARIANT GLU-253</scope>
</reference>
<reference key="23">
    <citation type="journal article" date="2012" name="Hum. Mutat.">
        <title>Inactive matriptase-2 mutants found in IRIDA patients still repress hepcidin in a transfection assay despite having lost their serine protease activity.</title>
        <authorList>
            <person name="Guillem F."/>
            <person name="Kannengiesser C."/>
            <person name="Oudin C."/>
            <person name="Lenoir A."/>
            <person name="Matak P."/>
            <person name="Donadieu J."/>
            <person name="Isidor B."/>
            <person name="Mechinaud F."/>
            <person name="Aguilar-Martinez P."/>
            <person name="Beaumont C."/>
            <person name="Vaulont S."/>
            <person name="Grandchamp B."/>
            <person name="Nicolas G."/>
        </authorList>
    </citation>
    <scope>VARIANTS IRIDA LYS-114; PRO-235; CYS-418 AND ALA-765</scope>
    <scope>MUTAGENESIS OF ARG-576 AND SER-762</scope>
    <scope>CHARACTERIZATION OF VARIANTS IRIDA LYS-114; PRO-235; CYS-418 AND ALA-765</scope>
</reference>
<reference key="24">
    <citation type="journal article" date="2012" name="Pediatr. Blood Cancer">
        <title>A novel mutation Gly603Arg of TMPRSS6 in a Korean female with iron-refractory iron deficiency anemia.</title>
        <authorList>
            <person name="Choi H.S."/>
            <person name="Yang H.R."/>
            <person name="Song S.H."/>
            <person name="Seo J.Y."/>
            <person name="Lee K.O."/>
            <person name="Kim H.J."/>
        </authorList>
    </citation>
    <scope>VARIANT IRIDA ARG-603</scope>
</reference>
<reference key="25">
    <citation type="journal article" date="2014" name="Hum. Mutat.">
        <title>Functional and clinical impact of novel TMPRSS6 variants in iron-refractory iron-deficiency anemia patients and genotype-phenotype studies.</title>
        <authorList>
            <person name="De Falco L."/>
            <person name="Silvestri L."/>
            <person name="Kannengiesser C."/>
            <person name="Moran E."/>
            <person name="Oudin C."/>
            <person name="Rausa M."/>
            <person name="Bruno M."/>
            <person name="Aranda J."/>
            <person name="Argiles B."/>
            <person name="Yenicesu I."/>
            <person name="Falcon-Rodriguez M."/>
            <person name="Yilmaz-Keskin E."/>
            <person name="Kocak U."/>
            <person name="Beaumont C."/>
            <person name="Camaschella C."/>
            <person name="Iolascon A."/>
            <person name="Grandchamp B."/>
            <person name="Sanchez M."/>
        </authorList>
    </citation>
    <scope>VARIANTS IRIDA CYS-247; ASN-287; LEU-304; PHE-335; ARG-510; GLY-521; ARG-590; TRP-597; GLY-605; ARG-606 AND THR-623</scope>
    <scope>CHARACTERIZATION OF VARIANTS IRIDA CYS-247; ASN-287; PHE-335; ARG-510; ARG-590; TRP-597; GLY-605 AND ARG-606</scope>
    <scope>FUNCTION</scope>
    <scope>SUBCELLULAR LOCATION</scope>
    <scope>PROTEOLYTIC PROCESSING</scope>
</reference>
<reference key="26">
    <citation type="journal article" date="2015" name="Am. J. Physiol.">
        <title>Functional analysis of Matriptase-2 mutations and domains: Insights into the molecular basis of iron refractory iron deficiency anemia.</title>
        <authorList>
            <person name="McDonald C.J."/>
            <person name="Ostini L."/>
            <person name="Bennett N.C."/>
            <person name="Subramaniam N."/>
            <person name="Hooper J."/>
            <person name="Velasco G."/>
            <person name="Wallace D.F."/>
            <person name="Subramaniam V.N."/>
        </authorList>
    </citation>
    <scope>CHARACTERIZATION OF VARIANTS IRIDA CYS-141; THR-212; GLN-271; ARG-442 AND SER-510</scope>
    <scope>SUBCELLULAR LOCATION</scope>
</reference>
<feature type="chain" id="PRO_0000088696" description="Transmembrane protease serine 6">
    <location>
        <begin position="1"/>
        <end position="811"/>
    </location>
</feature>
<feature type="topological domain" description="Cytoplasmic" evidence="2">
    <location>
        <begin position="1"/>
        <end position="55"/>
    </location>
</feature>
<feature type="transmembrane region" description="Helical; Signal-anchor for type II membrane protein" evidence="2">
    <location>
        <begin position="56"/>
        <end position="76"/>
    </location>
</feature>
<feature type="topological domain" description="Extracellular" evidence="2">
    <location>
        <begin position="77"/>
        <end position="811"/>
    </location>
</feature>
<feature type="domain" description="SEA" evidence="5">
    <location>
        <begin position="84"/>
        <end position="209"/>
    </location>
</feature>
<feature type="domain" description="CUB 1" evidence="3">
    <location>
        <begin position="213"/>
        <end position="336"/>
    </location>
</feature>
<feature type="domain" description="CUB 2" evidence="3">
    <location>
        <begin position="335"/>
        <end position="452"/>
    </location>
</feature>
<feature type="domain" description="LDL-receptor class A 1" evidence="4">
    <location>
        <begin position="457"/>
        <end position="489"/>
    </location>
</feature>
<feature type="domain" description="LDL-receptor class A 2" evidence="4">
    <location>
        <begin position="490"/>
        <end position="526"/>
    </location>
</feature>
<feature type="domain" description="LDL-receptor class A 3" evidence="4">
    <location>
        <begin position="530"/>
        <end position="567"/>
    </location>
</feature>
<feature type="domain" description="Peptidase S1" evidence="6">
    <location>
        <begin position="577"/>
        <end position="811"/>
    </location>
</feature>
<feature type="active site" description="Charge relay system" evidence="1">
    <location>
        <position position="617"/>
    </location>
</feature>
<feature type="active site" description="Charge relay system" evidence="1">
    <location>
        <position position="668"/>
    </location>
</feature>
<feature type="active site" description="Charge relay system" evidence="1">
    <location>
        <position position="762"/>
    </location>
</feature>
<feature type="glycosylation site" description="N-linked (GlcNAc...) asparagine" evidence="2">
    <location>
        <position position="136"/>
    </location>
</feature>
<feature type="glycosylation site" description="N-linked (GlcNAc...) asparagine" evidence="2">
    <location>
        <position position="184"/>
    </location>
</feature>
<feature type="glycosylation site" description="N-linked (GlcNAc...) asparagine" evidence="2">
    <location>
        <position position="216"/>
    </location>
</feature>
<feature type="glycosylation site" description="N-linked (GlcNAc...) asparagine" evidence="2">
    <location>
        <position position="338"/>
    </location>
</feature>
<feature type="glycosylation site" description="N-linked (GlcNAc...) asparagine" evidence="2">
    <location>
        <position position="433"/>
    </location>
</feature>
<feature type="glycosylation site" description="N-linked (GlcNAc...) asparagine" evidence="2">
    <location>
        <position position="453"/>
    </location>
</feature>
<feature type="glycosylation site" description="N-linked (GlcNAc...) asparagine" evidence="2">
    <location>
        <position position="518"/>
    </location>
</feature>
<feature type="disulfide bond" evidence="1">
    <location>
        <begin position="335"/>
        <end position="366"/>
    </location>
</feature>
<feature type="disulfide bond" evidence="1">
    <location>
        <begin position="458"/>
        <end position="470"/>
    </location>
</feature>
<feature type="disulfide bond" evidence="1">
    <location>
        <begin position="464"/>
        <end position="480"/>
    </location>
</feature>
<feature type="disulfide bond" evidence="1">
    <location>
        <begin position="474"/>
        <end position="489"/>
    </location>
</feature>
<feature type="disulfide bond" evidence="1">
    <location>
        <begin position="491"/>
        <end position="503"/>
    </location>
</feature>
<feature type="disulfide bond" evidence="1">
    <location>
        <begin position="497"/>
        <end position="516"/>
    </location>
</feature>
<feature type="disulfide bond" evidence="1">
    <location>
        <begin position="510"/>
        <end position="525"/>
    </location>
</feature>
<feature type="disulfide bond" evidence="1">
    <location>
        <begin position="531"/>
        <end position="543"/>
    </location>
</feature>
<feature type="disulfide bond" evidence="1">
    <location>
        <begin position="538"/>
        <end position="557"/>
    </location>
</feature>
<feature type="disulfide bond" evidence="1">
    <location>
        <begin position="551"/>
        <end position="566"/>
    </location>
</feature>
<feature type="disulfide bond" evidence="1">
    <location>
        <begin position="602"/>
        <end position="618"/>
    </location>
</feature>
<feature type="disulfide bond" evidence="1">
    <location>
        <begin position="702"/>
        <end position="768"/>
    </location>
</feature>
<feature type="disulfide bond" evidence="1">
    <location>
        <begin position="733"/>
        <end position="747"/>
    </location>
</feature>
<feature type="disulfide bond" evidence="1">
    <location>
        <begin position="758"/>
        <end position="787"/>
    </location>
</feature>
<feature type="splice variant" id="VSP_035562" description="In isoform 2 and isoform 4." evidence="26 27">
    <location>
        <begin position="1"/>
        <end position="9"/>
    </location>
</feature>
<feature type="splice variant" id="VSP_008379" description="In isoform 3." evidence="28">
    <original>LCGLRILQPYAERIPVVATAGITINFTSQISLTGPGVRVHYGLYNQSDPCPGE</original>
    <variation>YHFLSSLWLPFLPPPPSLPSSTVTPSLEAQVPNLRGAARGASRGWGWCQACCP</variation>
    <location>
        <begin position="409"/>
        <end position="461"/>
    </location>
</feature>
<feature type="splice variant" id="VSP_008380" description="In isoform 3." evidence="28">
    <location>
        <begin position="462"/>
        <end position="811"/>
    </location>
</feature>
<feature type="splice variant" id="VSP_035563" description="In isoform 4." evidence="27">
    <original>G</original>
    <variation>ALRADAVALFYGWRNQGSETCCC</variation>
    <location>
        <position position="714"/>
    </location>
</feature>
<feature type="sequence variant" id="VAR_068665" description="In IRIDA; does not undergo proteolytic processing; loss of activity; dbSNP:rs199474803." evidence="23">
    <original>E</original>
    <variation>K</variation>
    <location>
        <position position="114"/>
    </location>
</feature>
<feature type="sequence variant" id="VAR_068666" description="In IRIDA; results in reduced inhibition of HAMP promoter; dbSNP:rs267607121." evidence="14">
    <original>A</original>
    <variation>D</variation>
    <location>
        <position position="118"/>
    </location>
</feature>
<feature type="sequence variant" id="VAR_064075" description="In IRIDA; reduced HJV-mediated inhibition of HAMP transcription; does not undergo proteolytic processing; impaired localization to the cell membrane; able to interact with HJV; dbSNP:rs1430692214." evidence="18 20 25">
    <original>Y</original>
    <variation>C</variation>
    <location>
        <position position="141"/>
    </location>
</feature>
<feature type="sequence variant" id="VAR_064076" description="In IRIDA; reduced HJV-mediated inhibition of HAMP transcription; reduced localization to the cell membrane; no effect on catalytic activity; dbSNP:rs776877803." evidence="18 25">
    <original>I</original>
    <variation>T</variation>
    <location>
        <position position="212"/>
    </location>
</feature>
<feature type="sequence variant" id="VAR_036296" description="In a breast cancer sample; somatic mutation; dbSNP:rs749106338." evidence="9">
    <original>R</original>
    <variation>H</variation>
    <location>
        <position position="223"/>
    </location>
</feature>
<feature type="sequence variant" id="VAR_068667" description="In dbSNP:rs754848810." evidence="17">
    <original>G</original>
    <variation>D</variation>
    <location>
        <position position="228"/>
    </location>
</feature>
<feature type="sequence variant" id="VAR_036297" description="In a breast cancer sample; somatic mutation." evidence="9">
    <original>R</original>
    <variation>S</variation>
    <location>
        <position position="234"/>
    </location>
</feature>
<feature type="sequence variant" id="VAR_068668" description="In IRIDA; does not undergo proteolytic processing; loss of activity; dbSNP:rs199474802." evidence="23">
    <original>L</original>
    <variation>P</variation>
    <location>
        <position position="235"/>
    </location>
</feature>
<feature type="sequence variant" id="VAR_072901" description="In IRIDA; reduced HJV-mediated inhibition of HAMP transcription; loss of catalytic activity; autoproteolytic and HJV processing are impaired." evidence="24">
    <original>W</original>
    <variation>C</variation>
    <location>
        <position position="247"/>
    </location>
</feature>
<feature type="sequence variant" id="VAR_051841" description="In dbSNP:rs2235324." evidence="17 22">
    <original>K</original>
    <variation>E</variation>
    <location>
        <position position="253"/>
    </location>
</feature>
<feature type="sequence variant" id="VAR_044434" description="In dbSNP:rs2235324.">
    <original>E</original>
    <variation>K</variation>
    <location>
        <position position="262"/>
    </location>
</feature>
<feature type="sequence variant" id="VAR_064077" description="In IRIDA; no effect on HJV-mediated inhibition of HAMP transcription; no effect on localization to the cell membrane; no effect on catalytic activity; HJV processing is not affected; dbSNP:rs776180387." evidence="18 25">
    <original>R</original>
    <variation>Q</variation>
    <location>
        <position position="271"/>
    </location>
</feature>
<feature type="sequence variant" id="VAR_072902" description="In IRIDA; no effect on HJV-mediated inhibition of HAMP transcription; no effect on catalytic activity; autoproteolytic and HJV processing are not affected; dbSNP:rs1449962575." evidence="24">
    <original>T</original>
    <variation>N</variation>
    <location>
        <position position="287"/>
    </location>
</feature>
<feature type="sequence variant" id="VAR_051842" description="In dbSNP:rs5995378.">
    <original>S</original>
    <variation>L</variation>
    <location>
        <position position="288"/>
    </location>
</feature>
<feature type="sequence variant" id="VAR_064078" description="In IRIDA; dbSNP:rs1373272804." evidence="15 18 24">
    <original>S</original>
    <variation>L</variation>
    <location>
        <position position="304"/>
    </location>
</feature>
<feature type="sequence variant" id="VAR_072903" description="In IRIDA; reduced HJV-mediated inhibition of HAMP transcription; loss of catalytic activity; autoproteolytic and HJV processing are impaired." evidence="24">
    <original>C</original>
    <variation>F</variation>
    <location>
        <position position="335"/>
    </location>
</feature>
<feature type="sequence variant" id="VAR_068669" description="In IRIDA; does not undergo proteolytic processing; loss of activity; dbSNP:rs199474804." evidence="23">
    <original>Y</original>
    <variation>C</variation>
    <location>
        <position position="418"/>
    </location>
</feature>
<feature type="sequence variant" id="VAR_044435" description="In IRIDA; reduced HJV-mediated inhibition of HAMP transcription; reduced localization to the cell membrane; altered catalytic activity; autoproteolytic processing is reduced but it retains the ability to process HJV; able to interact with HJV; dbSNP:rs137853119." evidence="10 13 25">
    <original>G</original>
    <variation>R</variation>
    <location>
        <position position="442"/>
    </location>
</feature>
<feature type="sequence variant" id="VAR_068670" description="In dbSNP:rs117576908." evidence="17">
    <original>R</original>
    <variation>W</variation>
    <location>
        <position position="446"/>
    </location>
</feature>
<feature type="sequence variant" id="VAR_072904" description="In IRIDA; reduced HJV-mediated inhibition of HAMP transcription; loss of catalytic activity; autoproteolytic and HJV processing are impaired." evidence="24">
    <original>C</original>
    <variation>R</variation>
    <location>
        <position position="510"/>
    </location>
</feature>
<feature type="sequence variant" id="VAR_064079" description="In IRIDA; reduced HJV-mediated inhibition of HAMP transcription; reduced localization to the cell membrane; loss of catalytic activity; no ability to process HJV." evidence="18 25">
    <original>C</original>
    <variation>S</variation>
    <location>
        <position position="510"/>
    </location>
</feature>
<feature type="sequence variant" id="VAR_072905" description="In IRIDA." evidence="24">
    <original>D</original>
    <variation>G</variation>
    <location>
        <position position="521"/>
    </location>
</feature>
<feature type="sequence variant" id="VAR_044436" description="In IRIDA; reduced expression at the cell surface; partially retained in the Golgi apparatus; does not undergo proteolytic processing; able to interact with HJV; results in reduced inhibition of HAMP promoter; dbSNP:rs137853120." evidence="10 13">
    <original>D</original>
    <variation>N</variation>
    <location>
        <position position="521"/>
    </location>
</feature>
<feature type="sequence variant" id="VAR_068671" description="In IRIDA; reduced expression at the cell surface; partially retained in the Golgi apparatus; does not undergo proteolytic processing; able to interact with HJV; results in reduced inhibition of HAMP promoter; dbSNP:rs387907018." evidence="13">
    <original>E</original>
    <variation>K</variation>
    <location>
        <position position="522"/>
    </location>
</feature>
<feature type="sequence variant" id="VAR_072906" description="In IRIDA; reduced HJV-mediated inhibition of HAMP transcription; loss of catalytic activity; autoproteolytic and HJV processing are impaired; dbSNP:rs770897887." evidence="24">
    <original>W</original>
    <variation>R</variation>
    <location>
        <position position="590"/>
    </location>
</feature>
<feature type="sequence variant" id="VAR_072907" description="In IRIDA; slightly reduced HJV-mediated inhibition of HAMP transcription; loss of catalytic activity; autoproteolytic and HJV processing are significantly reduced; dbSNP:rs773272073." evidence="24">
    <original>R</original>
    <variation>W</variation>
    <location>
        <position position="597"/>
    </location>
</feature>
<feature type="sequence variant" id="VAR_068672" description="In IRIDA; dbSNP:rs769083817." evidence="21">
    <original>G</original>
    <variation>R</variation>
    <location>
        <position position="603"/>
    </location>
</feature>
<feature type="sequence variant" id="VAR_072908" description="In IRIDA; reduced HJV-mediated inhibition of HAMP transcription; loss of catalytic activity; autoproteolytic and HJV processing are impaired." evidence="24">
    <original>A</original>
    <variation>G</variation>
    <location>
        <position position="605"/>
    </location>
</feature>
<feature type="sequence variant" id="VAR_072909" description="In IRIDA; reduced HJV-mediated inhibition of HAMP transcription; loss of catalytic activity; autoproteolytic and HJV processing are impaired." evidence="24">
    <original>L</original>
    <variation>R</variation>
    <location>
        <position position="606"/>
    </location>
</feature>
<feature type="sequence variant" id="VAR_072910" description="In IRIDA." evidence="24">
    <original>S</original>
    <variation>T</variation>
    <location>
        <position position="623"/>
    </location>
</feature>
<feature type="sequence variant" id="VAR_068673" evidence="17">
    <original>L</original>
    <variation>F</variation>
    <location>
        <position position="674"/>
    </location>
</feature>
<feature type="sequence variant" id="VAR_051843" description="In dbSNP:rs855791." evidence="8 17">
    <original>V</original>
    <variation>A</variation>
    <location>
        <position position="736"/>
    </location>
</feature>
<feature type="sequence variant" id="VAR_051844" description="In dbSNP:rs11703011.">
    <original>G</original>
    <variation>D</variation>
    <location>
        <position position="763"/>
    </location>
</feature>
<feature type="sequence variant" id="VAR_068674" description="In IRIDA; severely reduced proteolytic processing; loss of activity; dbSNP:rs199474805." evidence="23">
    <original>P</original>
    <variation>A</variation>
    <location>
        <position position="765"/>
    </location>
</feature>
<feature type="sequence variant" id="VAR_044437" description="In IRIDA; reduced proteolytic processing; reduced expression to plasma membrane; does not affect binding to HJV; dbSNP:rs776069764." evidence="10 12">
    <original>R</original>
    <variation>C</variation>
    <location>
        <position position="774"/>
    </location>
</feature>
<feature type="sequence variant" id="VAR_068675" description="In dbSNP:rs139105452." evidence="17">
    <original>V</original>
    <variation>I</variation>
    <location>
        <position position="795"/>
    </location>
</feature>
<feature type="mutagenesis site" description="Does not undergo proteolytic processing." evidence="23">
    <original>R</original>
    <variation>A</variation>
    <location>
        <position position="576"/>
    </location>
</feature>
<feature type="mutagenesis site" description="Does not undergo proteolytic processing." evidence="19 23">
    <original>S</original>
    <variation>A</variation>
    <location>
        <position position="762"/>
    </location>
</feature>
<feature type="sequence conflict" description="In Ref. 4; CAQ07364." evidence="30" ref="4">
    <original>T</original>
    <variation>I</variation>
    <location sequence="Q8IU80-2">
        <position position="430"/>
    </location>
</feature>
<dbReference type="EC" id="3.4.21.-"/>
<dbReference type="EMBL" id="AY055383">
    <property type="protein sequence ID" value="AAL16413.1"/>
    <property type="molecule type" value="Genomic_DNA"/>
</dbReference>
<dbReference type="EMBL" id="AY055384">
    <property type="protein sequence ID" value="AAL16414.1"/>
    <property type="molecule type" value="mRNA"/>
</dbReference>
<dbReference type="EMBL" id="AY358398">
    <property type="protein sequence ID" value="AAQ88764.1"/>
    <property type="molecule type" value="mRNA"/>
</dbReference>
<dbReference type="EMBL" id="CR456446">
    <property type="protein sequence ID" value="CAG30332.1"/>
    <property type="molecule type" value="mRNA"/>
</dbReference>
<dbReference type="EMBL" id="AL022314">
    <property type="protein sequence ID" value="CAQ07360.1"/>
    <property type="molecule type" value="Genomic_DNA"/>
</dbReference>
<dbReference type="EMBL" id="AL022314">
    <property type="protein sequence ID" value="CAQ07361.1"/>
    <property type="molecule type" value="Genomic_DNA"/>
</dbReference>
<dbReference type="EMBL" id="AL022314">
    <property type="protein sequence ID" value="CAQ07363.1"/>
    <property type="molecule type" value="Genomic_DNA"/>
</dbReference>
<dbReference type="EMBL" id="AL022314">
    <property type="protein sequence ID" value="CAQ07364.1"/>
    <property type="molecule type" value="Genomic_DNA"/>
</dbReference>
<dbReference type="EMBL" id="AJ319876">
    <property type="protein sequence ID" value="CAC85953.1"/>
    <property type="molecule type" value="mRNA"/>
</dbReference>
<dbReference type="EMBL" id="BC039082">
    <property type="protein sequence ID" value="AAH39082.1"/>
    <property type="molecule type" value="mRNA"/>
</dbReference>
<dbReference type="CCDS" id="CCDS74856.1">
    <molecule id="Q8IU80-1"/>
</dbReference>
<dbReference type="CCDS" id="CCDS74857.1">
    <molecule id="Q8IU80-5"/>
</dbReference>
<dbReference type="RefSeq" id="NP_001275929.1">
    <molecule id="Q8IU80-5"/>
    <property type="nucleotide sequence ID" value="NM_001289000.2"/>
</dbReference>
<dbReference type="RefSeq" id="NP_001275930.1">
    <molecule id="Q8IU80-1"/>
    <property type="nucleotide sequence ID" value="NM_001289001.2"/>
</dbReference>
<dbReference type="RefSeq" id="NP_001361433.1">
    <molecule id="Q8IU80-1"/>
    <property type="nucleotide sequence ID" value="NM_001374504.1"/>
</dbReference>
<dbReference type="RefSeq" id="NP_705837.2">
    <molecule id="Q8IU80-1"/>
    <property type="nucleotide sequence ID" value="NM_153609.4"/>
</dbReference>
<dbReference type="RefSeq" id="XP_024307935.1">
    <molecule id="Q8IU80-5"/>
    <property type="nucleotide sequence ID" value="XM_024452167.2"/>
</dbReference>
<dbReference type="RefSeq" id="XP_024307936.1">
    <molecule id="Q8IU80-5"/>
    <property type="nucleotide sequence ID" value="XM_024452168.2"/>
</dbReference>
<dbReference type="SMR" id="Q8IU80"/>
<dbReference type="BioGRID" id="127898">
    <property type="interactions" value="2"/>
</dbReference>
<dbReference type="FunCoup" id="Q8IU80">
    <property type="interactions" value="99"/>
</dbReference>
<dbReference type="IntAct" id="Q8IU80">
    <property type="interactions" value="7"/>
</dbReference>
<dbReference type="MINT" id="Q8IU80"/>
<dbReference type="STRING" id="9606.ENSP00000384964"/>
<dbReference type="BindingDB" id="Q8IU80"/>
<dbReference type="ChEMBL" id="CHEMBL1795139"/>
<dbReference type="GuidetoPHARMACOLOGY" id="2422"/>
<dbReference type="MEROPS" id="S01.308"/>
<dbReference type="GlyCosmos" id="Q8IU80">
    <property type="glycosylation" value="7 sites, No reported glycans"/>
</dbReference>
<dbReference type="GlyGen" id="Q8IU80">
    <property type="glycosylation" value="8 sites"/>
</dbReference>
<dbReference type="iPTMnet" id="Q8IU80"/>
<dbReference type="PhosphoSitePlus" id="Q8IU80"/>
<dbReference type="BioMuta" id="TMPRSS6"/>
<dbReference type="DMDM" id="209572718"/>
<dbReference type="MassIVE" id="Q8IU80"/>
<dbReference type="PaxDb" id="9606-ENSP00000371211"/>
<dbReference type="PeptideAtlas" id="Q8IU80"/>
<dbReference type="ProteomicsDB" id="70516">
    <molecule id="Q8IU80-4"/>
</dbReference>
<dbReference type="ProteomicsDB" id="70517">
    <molecule id="Q8IU80-1"/>
</dbReference>
<dbReference type="ProteomicsDB" id="70518">
    <molecule id="Q8IU80-2"/>
</dbReference>
<dbReference type="ProteomicsDB" id="70519">
    <molecule id="Q8IU80-5"/>
</dbReference>
<dbReference type="Antibodypedia" id="25860">
    <property type="antibodies" value="146 antibodies from 22 providers"/>
</dbReference>
<dbReference type="DNASU" id="164656"/>
<dbReference type="Ensembl" id="ENST00000346753.9">
    <molecule id="Q8IU80-1"/>
    <property type="protein sequence ID" value="ENSP00000334962.6"/>
    <property type="gene ID" value="ENSG00000187045.19"/>
</dbReference>
<dbReference type="Ensembl" id="ENST00000381792.6">
    <molecule id="Q8IU80-5"/>
    <property type="protein sequence ID" value="ENSP00000371211.2"/>
    <property type="gene ID" value="ENSG00000187045.19"/>
</dbReference>
<dbReference type="Ensembl" id="ENST00000406725.6">
    <molecule id="Q8IU80-1"/>
    <property type="protein sequence ID" value="ENSP00000385453.1"/>
    <property type="gene ID" value="ENSG00000187045.19"/>
</dbReference>
<dbReference type="Ensembl" id="ENST00000406856.7">
    <molecule id="Q8IU80-5"/>
    <property type="protein sequence ID" value="ENSP00000384964.1"/>
    <property type="gene ID" value="ENSG00000187045.19"/>
</dbReference>
<dbReference type="Ensembl" id="ENST00000676104.1">
    <molecule id="Q8IU80-1"/>
    <property type="protein sequence ID" value="ENSP00000501573.1"/>
    <property type="gene ID" value="ENSG00000187045.19"/>
</dbReference>
<dbReference type="GeneID" id="164656"/>
<dbReference type="KEGG" id="hsa:164656"/>
<dbReference type="MANE-Select" id="ENST00000676104.1">
    <molecule id="Q8IU80-1"/>
    <property type="protein sequence ID" value="ENSP00000501573.1"/>
    <property type="RefSeq nucleotide sequence ID" value="NM_001374504.1"/>
    <property type="RefSeq protein sequence ID" value="NP_001361433.1"/>
</dbReference>
<dbReference type="UCSC" id="uc003aqs.3">
    <molecule id="Q8IU80-4"/>
    <property type="organism name" value="human"/>
</dbReference>
<dbReference type="AGR" id="HGNC:16517"/>
<dbReference type="CTD" id="164656"/>
<dbReference type="DisGeNET" id="164656"/>
<dbReference type="GeneCards" id="TMPRSS6"/>
<dbReference type="HGNC" id="HGNC:16517">
    <property type="gene designation" value="TMPRSS6"/>
</dbReference>
<dbReference type="HPA" id="ENSG00000187045">
    <property type="expression patterns" value="Tissue enriched (liver)"/>
</dbReference>
<dbReference type="MalaCards" id="TMPRSS6"/>
<dbReference type="MIM" id="206200">
    <property type="type" value="phenotype"/>
</dbReference>
<dbReference type="MIM" id="609862">
    <property type="type" value="gene"/>
</dbReference>
<dbReference type="neXtProt" id="NX_Q8IU80"/>
<dbReference type="OpenTargets" id="ENSG00000187045"/>
<dbReference type="Orphanet" id="209981">
    <property type="disease" value="IRIDA syndrome"/>
</dbReference>
<dbReference type="PharmGKB" id="PA134880399"/>
<dbReference type="VEuPathDB" id="HostDB:ENSG00000187045"/>
<dbReference type="eggNOG" id="KOG3627">
    <property type="taxonomic scope" value="Eukaryota"/>
</dbReference>
<dbReference type="GeneTree" id="ENSGT00940000160104"/>
<dbReference type="HOGENOM" id="CLU_006842_19_3_1"/>
<dbReference type="InParanoid" id="Q8IU80"/>
<dbReference type="OMA" id="WFALQIP"/>
<dbReference type="OrthoDB" id="93664at2759"/>
<dbReference type="PAN-GO" id="Q8IU80">
    <property type="GO annotations" value="2 GO annotations based on evolutionary models"/>
</dbReference>
<dbReference type="PhylomeDB" id="Q8IU80"/>
<dbReference type="TreeFam" id="TF330647"/>
<dbReference type="BRENDA" id="3.4.21.109">
    <property type="organism ID" value="2681"/>
</dbReference>
<dbReference type="PathwayCommons" id="Q8IU80"/>
<dbReference type="Reactome" id="R-HSA-1442490">
    <property type="pathway name" value="Collagen degradation"/>
</dbReference>
<dbReference type="Reactome" id="R-HSA-1474228">
    <property type="pathway name" value="Degradation of the extracellular matrix"/>
</dbReference>
<dbReference type="SignaLink" id="Q8IU80"/>
<dbReference type="BioGRID-ORCS" id="164656">
    <property type="hits" value="13 hits in 1145 CRISPR screens"/>
</dbReference>
<dbReference type="ChiTaRS" id="TMPRSS6">
    <property type="organism name" value="human"/>
</dbReference>
<dbReference type="GeneWiki" id="TMPRSS6"/>
<dbReference type="GenomeRNAi" id="164656"/>
<dbReference type="Pharos" id="Q8IU80">
    <property type="development level" value="Tchem"/>
</dbReference>
<dbReference type="PRO" id="PR:Q8IU80"/>
<dbReference type="Proteomes" id="UP000005640">
    <property type="component" value="Chromosome 22"/>
</dbReference>
<dbReference type="RNAct" id="Q8IU80">
    <property type="molecule type" value="protein"/>
</dbReference>
<dbReference type="Bgee" id="ENSG00000187045">
    <property type="expression patterns" value="Expressed in right lobe of liver and 118 other cell types or tissues"/>
</dbReference>
<dbReference type="ExpressionAtlas" id="Q8IU80">
    <property type="expression patterns" value="baseline and differential"/>
</dbReference>
<dbReference type="GO" id="GO:0005615">
    <property type="term" value="C:extracellular space"/>
    <property type="evidence" value="ECO:0000314"/>
    <property type="project" value="UniProtKB"/>
</dbReference>
<dbReference type="GO" id="GO:0005886">
    <property type="term" value="C:plasma membrane"/>
    <property type="evidence" value="ECO:0000314"/>
    <property type="project" value="UniProtKB"/>
</dbReference>
<dbReference type="GO" id="GO:0004222">
    <property type="term" value="F:metalloendopeptidase activity"/>
    <property type="evidence" value="ECO:0000304"/>
    <property type="project" value="Reactome"/>
</dbReference>
<dbReference type="GO" id="GO:0004252">
    <property type="term" value="F:serine-type endopeptidase activity"/>
    <property type="evidence" value="ECO:0007669"/>
    <property type="project" value="InterPro"/>
</dbReference>
<dbReference type="GO" id="GO:0030509">
    <property type="term" value="P:BMP signaling pathway"/>
    <property type="evidence" value="ECO:0007669"/>
    <property type="project" value="Ensembl"/>
</dbReference>
<dbReference type="GO" id="GO:0030574">
    <property type="term" value="P:collagen catabolic process"/>
    <property type="evidence" value="ECO:0000304"/>
    <property type="project" value="Reactome"/>
</dbReference>
<dbReference type="GO" id="GO:0022617">
    <property type="term" value="P:extracellular matrix disassembly"/>
    <property type="evidence" value="ECO:0000304"/>
    <property type="project" value="Reactome"/>
</dbReference>
<dbReference type="GO" id="GO:0006879">
    <property type="term" value="P:intracellular iron ion homeostasis"/>
    <property type="evidence" value="ECO:0000250"/>
    <property type="project" value="BHF-UCL"/>
</dbReference>
<dbReference type="GO" id="GO:0033619">
    <property type="term" value="P:membrane protein proteolysis"/>
    <property type="evidence" value="ECO:0000315"/>
    <property type="project" value="UniProtKB"/>
</dbReference>
<dbReference type="GO" id="GO:0060586">
    <property type="term" value="P:multicellular organismal-level iron ion homeostasis"/>
    <property type="evidence" value="ECO:0000315"/>
    <property type="project" value="UniProtKB"/>
</dbReference>
<dbReference type="GO" id="GO:0030514">
    <property type="term" value="P:negative regulation of BMP signaling pathway"/>
    <property type="evidence" value="ECO:0007669"/>
    <property type="project" value="Ensembl"/>
</dbReference>
<dbReference type="GO" id="GO:0045892">
    <property type="term" value="P:negative regulation of DNA-templated transcription"/>
    <property type="evidence" value="ECO:0000315"/>
    <property type="project" value="UniProtKB"/>
</dbReference>
<dbReference type="GO" id="GO:0000122">
    <property type="term" value="P:negative regulation of transcription by RNA polymerase II"/>
    <property type="evidence" value="ECO:0000250"/>
    <property type="project" value="BHF-UCL"/>
</dbReference>
<dbReference type="GO" id="GO:0045944">
    <property type="term" value="P:positive regulation of transcription by RNA polymerase II"/>
    <property type="evidence" value="ECO:0000250"/>
    <property type="project" value="BHF-UCL"/>
</dbReference>
<dbReference type="GO" id="GO:0097264">
    <property type="term" value="P:self proteolysis"/>
    <property type="evidence" value="ECO:0000315"/>
    <property type="project" value="UniProtKB"/>
</dbReference>
<dbReference type="CDD" id="cd00041">
    <property type="entry name" value="CUB"/>
    <property type="match status" value="1"/>
</dbReference>
<dbReference type="CDD" id="cd00112">
    <property type="entry name" value="LDLa"/>
    <property type="match status" value="3"/>
</dbReference>
<dbReference type="CDD" id="cd00190">
    <property type="entry name" value="Tryp_SPc"/>
    <property type="match status" value="1"/>
</dbReference>
<dbReference type="FunFam" id="2.40.10.10:FF:000003">
    <property type="entry name" value="Transmembrane serine protease 3"/>
    <property type="match status" value="1"/>
</dbReference>
<dbReference type="FunFam" id="2.60.120.290:FF:000027">
    <property type="entry name" value="Transmembrane serine protease 6"/>
    <property type="match status" value="1"/>
</dbReference>
<dbReference type="FunFam" id="3.30.70.960:FF:000004">
    <property type="entry name" value="Transmembrane serine protease 6"/>
    <property type="match status" value="1"/>
</dbReference>
<dbReference type="FunFam" id="4.10.400.10:FF:000096">
    <property type="entry name" value="Transmembrane serine protease 6"/>
    <property type="match status" value="1"/>
</dbReference>
<dbReference type="FunFam" id="4.10.400.10:FF:000097">
    <property type="entry name" value="Transmembrane serine protease 6"/>
    <property type="match status" value="1"/>
</dbReference>
<dbReference type="Gene3D" id="4.10.400.10">
    <property type="entry name" value="Low-density Lipoprotein Receptor"/>
    <property type="match status" value="3"/>
</dbReference>
<dbReference type="Gene3D" id="3.30.70.960">
    <property type="entry name" value="SEA domain"/>
    <property type="match status" value="1"/>
</dbReference>
<dbReference type="Gene3D" id="2.60.120.290">
    <property type="entry name" value="Spermadhesin, CUB domain"/>
    <property type="match status" value="1"/>
</dbReference>
<dbReference type="Gene3D" id="2.40.10.10">
    <property type="entry name" value="Trypsin-like serine proteases"/>
    <property type="match status" value="1"/>
</dbReference>
<dbReference type="InterPro" id="IPR000859">
    <property type="entry name" value="CUB_dom"/>
</dbReference>
<dbReference type="InterPro" id="IPR036055">
    <property type="entry name" value="LDL_receptor-like_sf"/>
</dbReference>
<dbReference type="InterPro" id="IPR002172">
    <property type="entry name" value="LDrepeatLR_classA_rpt"/>
</dbReference>
<dbReference type="InterPro" id="IPR017118">
    <property type="entry name" value="Pept_S1A_matriptase-2"/>
</dbReference>
<dbReference type="InterPro" id="IPR009003">
    <property type="entry name" value="Peptidase_S1_PA"/>
</dbReference>
<dbReference type="InterPro" id="IPR043504">
    <property type="entry name" value="Peptidase_S1_PA_chymotrypsin"/>
</dbReference>
<dbReference type="InterPro" id="IPR001314">
    <property type="entry name" value="Peptidase_S1A"/>
</dbReference>
<dbReference type="InterPro" id="IPR000082">
    <property type="entry name" value="SEA_dom"/>
</dbReference>
<dbReference type="InterPro" id="IPR036364">
    <property type="entry name" value="SEA_dom_sf"/>
</dbReference>
<dbReference type="InterPro" id="IPR035914">
    <property type="entry name" value="Sperma_CUB_dom_sf"/>
</dbReference>
<dbReference type="InterPro" id="IPR001254">
    <property type="entry name" value="Trypsin_dom"/>
</dbReference>
<dbReference type="InterPro" id="IPR018114">
    <property type="entry name" value="TRYPSIN_HIS"/>
</dbReference>
<dbReference type="InterPro" id="IPR033116">
    <property type="entry name" value="TRYPSIN_SER"/>
</dbReference>
<dbReference type="PANTHER" id="PTHR24252">
    <property type="entry name" value="ACROSIN-RELATED"/>
    <property type="match status" value="1"/>
</dbReference>
<dbReference type="PANTHER" id="PTHR24252:SF20">
    <property type="entry name" value="LOW QUALITY PROTEIN: TRANSMEMBRANE PROTEASE SERINE 6"/>
    <property type="match status" value="1"/>
</dbReference>
<dbReference type="Pfam" id="PF00057">
    <property type="entry name" value="Ldl_recept_a"/>
    <property type="match status" value="2"/>
</dbReference>
<dbReference type="Pfam" id="PF01390">
    <property type="entry name" value="SEA"/>
    <property type="match status" value="1"/>
</dbReference>
<dbReference type="Pfam" id="PF00089">
    <property type="entry name" value="Trypsin"/>
    <property type="match status" value="1"/>
</dbReference>
<dbReference type="PIRSF" id="PIRSF037135">
    <property type="entry name" value="Matriptase-2"/>
    <property type="match status" value="1"/>
</dbReference>
<dbReference type="PRINTS" id="PR00722">
    <property type="entry name" value="CHYMOTRYPSIN"/>
</dbReference>
<dbReference type="SMART" id="SM00192">
    <property type="entry name" value="LDLa"/>
    <property type="match status" value="3"/>
</dbReference>
<dbReference type="SMART" id="SM00020">
    <property type="entry name" value="Tryp_SPc"/>
    <property type="match status" value="1"/>
</dbReference>
<dbReference type="SUPFAM" id="SSF57424">
    <property type="entry name" value="LDL receptor-like module"/>
    <property type="match status" value="3"/>
</dbReference>
<dbReference type="SUPFAM" id="SSF82671">
    <property type="entry name" value="SEA domain"/>
    <property type="match status" value="1"/>
</dbReference>
<dbReference type="SUPFAM" id="SSF49854">
    <property type="entry name" value="Spermadhesin, CUB domain"/>
    <property type="match status" value="2"/>
</dbReference>
<dbReference type="SUPFAM" id="SSF50494">
    <property type="entry name" value="Trypsin-like serine proteases"/>
    <property type="match status" value="1"/>
</dbReference>
<dbReference type="PROSITE" id="PS01180">
    <property type="entry name" value="CUB"/>
    <property type="match status" value="1"/>
</dbReference>
<dbReference type="PROSITE" id="PS01209">
    <property type="entry name" value="LDLRA_1"/>
    <property type="match status" value="2"/>
</dbReference>
<dbReference type="PROSITE" id="PS50068">
    <property type="entry name" value="LDLRA_2"/>
    <property type="match status" value="3"/>
</dbReference>
<dbReference type="PROSITE" id="PS50024">
    <property type="entry name" value="SEA"/>
    <property type="match status" value="1"/>
</dbReference>
<dbReference type="PROSITE" id="PS50240">
    <property type="entry name" value="TRYPSIN_DOM"/>
    <property type="match status" value="1"/>
</dbReference>
<dbReference type="PROSITE" id="PS00134">
    <property type="entry name" value="TRYPSIN_HIS"/>
    <property type="match status" value="1"/>
</dbReference>
<dbReference type="PROSITE" id="PS00135">
    <property type="entry name" value="TRYPSIN_SER"/>
    <property type="match status" value="1"/>
</dbReference>
<name>TMPS6_HUMAN</name>
<keyword id="KW-0025">Alternative splicing</keyword>
<keyword id="KW-1003">Cell membrane</keyword>
<keyword id="KW-0225">Disease variant</keyword>
<keyword id="KW-1015">Disulfide bond</keyword>
<keyword id="KW-0325">Glycoprotein</keyword>
<keyword id="KW-0378">Hydrolase</keyword>
<keyword id="KW-0472">Membrane</keyword>
<keyword id="KW-0645">Protease</keyword>
<keyword id="KW-1267">Proteomics identification</keyword>
<keyword id="KW-1185">Reference proteome</keyword>
<keyword id="KW-0677">Repeat</keyword>
<keyword id="KW-0720">Serine protease</keyword>
<keyword id="KW-0735">Signal-anchor</keyword>
<keyword id="KW-0812">Transmembrane</keyword>
<keyword id="KW-1133">Transmembrane helix</keyword>
<keyword id="KW-0865">Zymogen</keyword>
<organism>
    <name type="scientific">Homo sapiens</name>
    <name type="common">Human</name>
    <dbReference type="NCBI Taxonomy" id="9606"/>
    <lineage>
        <taxon>Eukaryota</taxon>
        <taxon>Metazoa</taxon>
        <taxon>Chordata</taxon>
        <taxon>Craniata</taxon>
        <taxon>Vertebrata</taxon>
        <taxon>Euteleostomi</taxon>
        <taxon>Mammalia</taxon>
        <taxon>Eutheria</taxon>
        <taxon>Euarchontoglires</taxon>
        <taxon>Primates</taxon>
        <taxon>Haplorrhini</taxon>
        <taxon>Catarrhini</taxon>
        <taxon>Hominidae</taxon>
        <taxon>Homo</taxon>
    </lineage>
</organism>
<protein>
    <recommendedName>
        <fullName>Transmembrane protease serine 6</fullName>
        <ecNumber>3.4.21.-</ecNumber>
    </recommendedName>
    <alternativeName>
        <fullName>Matriptase-2</fullName>
    </alternativeName>
</protein>
<accession>Q8IU80</accession>
<accession>B0QYB4</accession>
<accession>B0QYB7</accession>
<accession>B0QYB8</accession>
<accession>Q5TI06</accession>
<accession>Q6ICC2</accession>
<accession>Q6UXD8</accession>
<accession>Q8IUE2</accession>
<accession>Q8IXV8</accession>